<gene>
    <name type="ordered locus">PA14_02130</name>
</gene>
<name>Y213_PSEAB</name>
<protein>
    <recommendedName>
        <fullName>Uncharacterized protein PA14_02130</fullName>
    </recommendedName>
</protein>
<reference key="1">
    <citation type="journal article" date="2006" name="Genome Biol.">
        <title>Genomic analysis reveals that Pseudomonas aeruginosa virulence is combinatorial.</title>
        <authorList>
            <person name="Lee D.G."/>
            <person name="Urbach J.M."/>
            <person name="Wu G."/>
            <person name="Liberati N.T."/>
            <person name="Feinbaum R.L."/>
            <person name="Miyata S."/>
            <person name="Diggins L.T."/>
            <person name="He J."/>
            <person name="Saucier M."/>
            <person name="Deziel E."/>
            <person name="Friedman L."/>
            <person name="Li L."/>
            <person name="Grills G."/>
            <person name="Montgomery K."/>
            <person name="Kucherlapati R."/>
            <person name="Rahme L.G."/>
            <person name="Ausubel F.M."/>
        </authorList>
    </citation>
    <scope>NUCLEOTIDE SEQUENCE [LARGE SCALE GENOMIC DNA]</scope>
    <source>
        <strain>UCBPP-PA14</strain>
    </source>
</reference>
<reference key="2">
    <citation type="journal article" date="2014" name="Anal. Bioanal. Chem.">
        <title>Potential of liquid-isoelectric-focusing protein fractionation to improve phosphoprotein characterization of Pseudomonas aeruginosa PA14.</title>
        <authorList>
            <person name="Ouidir T."/>
            <person name="Jarnier F."/>
            <person name="Cosette P."/>
            <person name="Jouenne T."/>
            <person name="Hardouin J."/>
        </authorList>
    </citation>
    <scope>IDENTIFICATION BY MASS SPECTROMETRY</scope>
    <scope>PHOSPHORYLATION AT THR-68</scope>
    <source>
        <strain>UCBPP-PA14</strain>
    </source>
</reference>
<proteinExistence type="evidence at protein level"/>
<feature type="chain" id="PRO_0000431469" description="Uncharacterized protein PA14_02130">
    <location>
        <begin position="1"/>
        <end position="126"/>
    </location>
</feature>
<feature type="modified residue" description="Phosphothreonine" evidence="1">
    <location>
        <position position="68"/>
    </location>
</feature>
<feature type="strand" evidence="2">
    <location>
        <begin position="4"/>
        <end position="6"/>
    </location>
</feature>
<feature type="strand" evidence="2">
    <location>
        <begin position="10"/>
        <end position="12"/>
    </location>
</feature>
<feature type="strand" evidence="2">
    <location>
        <begin position="14"/>
        <end position="18"/>
    </location>
</feature>
<feature type="turn" evidence="2">
    <location>
        <begin position="19"/>
        <end position="22"/>
    </location>
</feature>
<feature type="strand" evidence="2">
    <location>
        <begin position="23"/>
        <end position="30"/>
    </location>
</feature>
<feature type="helix" evidence="2">
    <location>
        <begin position="35"/>
        <end position="51"/>
    </location>
</feature>
<feature type="strand" evidence="2">
    <location>
        <begin position="57"/>
        <end position="66"/>
    </location>
</feature>
<feature type="helix" evidence="2">
    <location>
        <begin position="68"/>
        <end position="86"/>
    </location>
</feature>
<feature type="strand" evidence="2">
    <location>
        <begin position="91"/>
        <end position="97"/>
    </location>
</feature>
<feature type="helix" evidence="2">
    <location>
        <begin position="106"/>
        <end position="113"/>
    </location>
</feature>
<feature type="strand" evidence="2">
    <location>
        <begin position="119"/>
        <end position="123"/>
    </location>
</feature>
<accession>Q02UQ8</accession>
<sequence>MSDLHIPGTQSTPAIQGDWQAGRLSMQGDSYPENSYELFGQVIDWVERFLADGQRPLELDLRLLYLNTSSIKAMMDILDLLEEAHQGGRPVSLRWHYDRRNERVAELAEEFREDCSFPFAIQAHDE</sequence>
<organism>
    <name type="scientific">Pseudomonas aeruginosa (strain UCBPP-PA14)</name>
    <dbReference type="NCBI Taxonomy" id="208963"/>
    <lineage>
        <taxon>Bacteria</taxon>
        <taxon>Pseudomonadati</taxon>
        <taxon>Pseudomonadota</taxon>
        <taxon>Gammaproteobacteria</taxon>
        <taxon>Pseudomonadales</taxon>
        <taxon>Pseudomonadaceae</taxon>
        <taxon>Pseudomonas</taxon>
    </lineage>
</organism>
<dbReference type="EMBL" id="CP000438">
    <property type="protein sequence ID" value="ABJ15127.1"/>
    <property type="molecule type" value="Genomic_DNA"/>
</dbReference>
<dbReference type="PDB" id="6K4F">
    <property type="method" value="X-ray"/>
    <property type="resolution" value="1.74 A"/>
    <property type="chains" value="U=1-126"/>
</dbReference>
<dbReference type="PDBsum" id="6K4F"/>
<dbReference type="SMR" id="Q02UQ8"/>
<dbReference type="iPTMnet" id="Q02UQ8"/>
<dbReference type="KEGG" id="pau:PA14_02130"/>
<dbReference type="PseudoCAP" id="PA14_02130"/>
<dbReference type="HOGENOM" id="CLU_129198_0_0_6"/>
<dbReference type="BioCyc" id="PAER208963:G1G74-178-MONOMER"/>
<dbReference type="Proteomes" id="UP000000653">
    <property type="component" value="Chromosome"/>
</dbReference>
<dbReference type="InterPro" id="IPR018530">
    <property type="entry name" value="SiaC"/>
</dbReference>
<dbReference type="NCBIfam" id="NF038265">
    <property type="entry name" value="phos_prot_SiaC"/>
    <property type="match status" value="1"/>
</dbReference>
<dbReference type="Pfam" id="PF09345">
    <property type="entry name" value="SiaC"/>
    <property type="match status" value="1"/>
</dbReference>
<evidence type="ECO:0000269" key="1">
    <source>
    </source>
</evidence>
<evidence type="ECO:0007829" key="2">
    <source>
        <dbReference type="PDB" id="6K4F"/>
    </source>
</evidence>
<keyword id="KW-0002">3D-structure</keyword>
<keyword id="KW-0597">Phosphoprotein</keyword>